<feature type="chain" id="PRO_0000423355" description="Cyclo(L-leucyl-L-phenylalanyl) synthase">
    <location>
        <begin position="1"/>
        <end position="239"/>
    </location>
</feature>
<feature type="active site" description="Nucleophile" evidence="6">
    <location>
        <position position="37"/>
    </location>
</feature>
<feature type="binding site" evidence="1">
    <location>
        <position position="40"/>
    </location>
    <ligand>
        <name>substrate</name>
    </ligand>
</feature>
<feature type="binding site" evidence="1">
    <location>
        <begin position="178"/>
        <end position="182"/>
    </location>
    <ligand>
        <name>substrate</name>
    </ligand>
</feature>
<feature type="binding site" evidence="1">
    <location>
        <position position="202"/>
    </location>
    <ligand>
        <name>substrate</name>
    </ligand>
</feature>
<feature type="site" description="Could have a critical role in the catalytic mechanism" evidence="1">
    <location>
        <position position="40"/>
    </location>
</feature>
<feature type="site" description="Could be involved in aa-tRNA binding" evidence="1">
    <location>
        <position position="98"/>
    </location>
</feature>
<feature type="site" description="Could be involved in aa-tRNA binding" evidence="1">
    <location>
        <position position="178"/>
    </location>
</feature>
<feature type="site" description="Could have a critical role in the catalytic mechanism" evidence="1">
    <location>
        <position position="182"/>
    </location>
</feature>
<feature type="site" description="Essential for the cyclodipeptide synthase specificity">
    <location>
        <position position="200"/>
    </location>
</feature>
<feature type="mutagenesis site" description="Poorly active." evidence="4">
    <original>G</original>
    <variation>A</variation>
    <location>
        <position position="35"/>
    </location>
</feature>
<feature type="mutagenesis site" description="Inactive." evidence="4">
    <original>S</original>
    <variation>A</variation>
    <location>
        <position position="37"/>
    </location>
</feature>
<feature type="mutagenesis site" description="Does not completely abolish the enzymatic activity." evidence="4">
    <original>S</original>
    <variation>C</variation>
    <location>
        <position position="37"/>
    </location>
</feature>
<feature type="mutagenesis site" description="Almost inactive." evidence="4">
    <original>Y</original>
    <variation>A</variation>
    <location>
        <position position="178"/>
    </location>
</feature>
<feature type="mutagenesis site" description="Poorly active." evidence="4">
    <original>Y</original>
    <variation>F</variation>
    <location>
        <position position="178"/>
    </location>
</feature>
<feature type="mutagenesis site" description="Inactive." evidence="4">
    <original>E</original>
    <variation>A</variation>
    <location>
        <position position="182"/>
    </location>
</feature>
<feature type="mutagenesis site" description="Inactive." evidence="4">
    <original>E</original>
    <variation>Q</variation>
    <location>
        <position position="182"/>
    </location>
</feature>
<feature type="mutagenesis site" description="It synthesizes mainly cyclo(L-Tyr-L-Leu) (cYL) instead of cFL." evidence="4">
    <original>L</original>
    <variation>N</variation>
    <location>
        <position position="200"/>
    </location>
</feature>
<feature type="mutagenesis site" description="It retains 11% of the enzymatic activity." evidence="4">
    <original>Y</original>
    <variation>F</variation>
    <location>
        <position position="202"/>
    </location>
</feature>
<feature type="strand" evidence="8">
    <location>
        <begin position="13"/>
        <end position="17"/>
    </location>
</feature>
<feature type="helix" evidence="8">
    <location>
        <begin position="20"/>
        <end position="22"/>
    </location>
</feature>
<feature type="helix" evidence="8">
    <location>
        <begin position="23"/>
        <end position="28"/>
    </location>
</feature>
<feature type="strand" evidence="7">
    <location>
        <begin position="29"/>
        <end position="39"/>
    </location>
</feature>
<feature type="helix" evidence="8">
    <location>
        <begin position="41"/>
        <end position="43"/>
    </location>
</feature>
<feature type="helix" evidence="7">
    <location>
        <begin position="45"/>
        <end position="58"/>
    </location>
</feature>
<feature type="strand" evidence="7">
    <location>
        <begin position="59"/>
        <end position="67"/>
    </location>
</feature>
<feature type="helix" evidence="7">
    <location>
        <begin position="71"/>
        <end position="78"/>
    </location>
</feature>
<feature type="helix" evidence="7">
    <location>
        <begin position="82"/>
        <end position="107"/>
    </location>
</feature>
<feature type="helix" evidence="7">
    <location>
        <begin position="111"/>
        <end position="113"/>
    </location>
</feature>
<feature type="strand" evidence="7">
    <location>
        <begin position="114"/>
        <end position="118"/>
    </location>
</feature>
<feature type="helix" evidence="7">
    <location>
        <begin position="119"/>
        <end position="122"/>
    </location>
</feature>
<feature type="helix" evidence="7">
    <location>
        <begin position="126"/>
        <end position="141"/>
    </location>
</feature>
<feature type="helix" evidence="7">
    <location>
        <begin position="143"/>
        <end position="158"/>
    </location>
</feature>
<feature type="strand" evidence="7">
    <location>
        <begin position="161"/>
        <end position="163"/>
    </location>
</feature>
<feature type="helix" evidence="7">
    <location>
        <begin position="169"/>
        <end position="193"/>
    </location>
</feature>
<feature type="strand" evidence="7">
    <location>
        <begin position="198"/>
        <end position="202"/>
    </location>
</feature>
<feature type="helix" evidence="7">
    <location>
        <begin position="207"/>
        <end position="212"/>
    </location>
</feature>
<feature type="strand" evidence="8">
    <location>
        <begin position="217"/>
        <end position="219"/>
    </location>
</feature>
<feature type="strand" evidence="7">
    <location>
        <begin position="225"/>
        <end position="229"/>
    </location>
</feature>
<feature type="helix" evidence="7">
    <location>
        <begin position="232"/>
        <end position="238"/>
    </location>
</feature>
<keyword id="KW-0002">3D-structure</keyword>
<keyword id="KW-0808">Transferase</keyword>
<organism>
    <name type="scientific">Streptomyces noursei</name>
    <name type="common">Streptomyces albulus</name>
    <dbReference type="NCBI Taxonomy" id="1971"/>
    <lineage>
        <taxon>Bacteria</taxon>
        <taxon>Bacillati</taxon>
        <taxon>Actinomycetota</taxon>
        <taxon>Actinomycetes</taxon>
        <taxon>Kitasatosporales</taxon>
        <taxon>Streptomycetaceae</taxon>
        <taxon>Streptomyces</taxon>
    </lineage>
</organism>
<sequence>MLAGLVPAPDHGMREEILGDRSRLIRQRGEHALIGISAGNSYFSQKNTVMLLQWAGQRFERTDVVYVDTHIDEMLIADGRSAQEAERSVKRTLKDLRRRLRRSLESVGDHAERFRVRSLSELQETPEYRAVRERTDRAFEEDAEFATACEDMVRAVVMNRPGDGVGISAEHLRAGLNYVLAEAPLFADSPGVFSVPSSVLCYHIDTPITAFLSRRETGFRAAEGQAYVVVRPQELADAA</sequence>
<dbReference type="EC" id="2.3.2.20"/>
<dbReference type="EMBL" id="AY129235">
    <property type="protein sequence ID" value="AAN07909.1"/>
    <property type="molecule type" value="Genomic_DNA"/>
</dbReference>
<dbReference type="PDB" id="3OQV">
    <property type="method" value="X-ray"/>
    <property type="resolution" value="1.90 A"/>
    <property type="chains" value="A=2-239"/>
</dbReference>
<dbReference type="PDB" id="4Q24">
    <property type="method" value="X-ray"/>
    <property type="resolution" value="2.90 A"/>
    <property type="chains" value="A=1-239"/>
</dbReference>
<dbReference type="PDBsum" id="3OQV"/>
<dbReference type="PDBsum" id="4Q24"/>
<dbReference type="SMR" id="Q8GED7"/>
<dbReference type="KEGG" id="ag:AAN07909"/>
<dbReference type="BRENDA" id="2.3.2.20">
    <property type="organism ID" value="11755"/>
</dbReference>
<dbReference type="BRENDA" id="2.3.2.22">
    <property type="organism ID" value="11755"/>
</dbReference>
<dbReference type="EvolutionaryTrace" id="Q8GED7"/>
<dbReference type="GO" id="GO:0016755">
    <property type="term" value="F:aminoacyltransferase activity"/>
    <property type="evidence" value="ECO:0000314"/>
    <property type="project" value="UniProtKB"/>
</dbReference>
<dbReference type="GO" id="GO:0002780">
    <property type="term" value="P:antibacterial peptide biosynthetic process"/>
    <property type="evidence" value="ECO:0000314"/>
    <property type="project" value="UniProtKB"/>
</dbReference>
<dbReference type="FunFam" id="3.40.50.11710:FF:000003">
    <property type="entry name" value="Cyclo(L-leucyl-L-phenylalanyl) synthase"/>
    <property type="match status" value="1"/>
</dbReference>
<dbReference type="Gene3D" id="3.40.50.11710">
    <property type="entry name" value="Cyclodipeptide synthase"/>
    <property type="match status" value="1"/>
</dbReference>
<dbReference type="InterPro" id="IPR030903">
    <property type="entry name" value="CDPS"/>
</dbReference>
<dbReference type="InterPro" id="IPR038622">
    <property type="entry name" value="CDPS_sf"/>
</dbReference>
<dbReference type="NCBIfam" id="TIGR04539">
    <property type="entry name" value="tRNA_cyclodipep"/>
    <property type="match status" value="1"/>
</dbReference>
<dbReference type="Pfam" id="PF16715">
    <property type="entry name" value="CDPS"/>
    <property type="match status" value="1"/>
</dbReference>
<gene>
    <name type="primary">albC</name>
</gene>
<comment type="function">
    <text evidence="2 3">Involved in the biosynthesis of albonoursin (cyclo[(alpha,beta-dehydro-Phe)-(alpha,beta-dehydro-Leu)]), an antibacterial peptide. It uses activated amino acids in the form of aminoacyl-tRNAs (aa-tRNAs) as substrates to catalyze the ATP-independent formation of cyclodipeptides which are intermediates in diketopiperazine (DKP) biosynthetic pathways. Catalyzes the formation of cyclo(L-Phe-L-Leu) (cFL) as major products from L-L-phenylalanyl-tRNA(Phe) and L-leucyl-tRNA(Leu). AlbC can also incorporate various nonpolar residues, such as L-phenylalanine, L-leucine, L-tyrosine and L-methionine, and to a much lesser extent L-alanine and L-valine, into cyclodipeptides. Indeed, ten possible cyclodipeptides composed of L-phenylalanine, L-leucine, L-tyrosine and L-methionine are all synthesized to detectable amounts by AlbC.</text>
</comment>
<comment type="catalytic activity">
    <reaction evidence="3">
        <text>L-phenylalanyl-tRNA(Phe) + L-leucyl-tRNA(Leu) = cyclo(L-phenylalanyl-L-leucyl) + tRNA(Phe) + tRNA(Leu) + H(+)</text>
        <dbReference type="Rhea" id="RHEA:50940"/>
        <dbReference type="Rhea" id="RHEA-COMP:9613"/>
        <dbReference type="Rhea" id="RHEA-COMP:9622"/>
        <dbReference type="Rhea" id="RHEA-COMP:9668"/>
        <dbReference type="Rhea" id="RHEA-COMP:9699"/>
        <dbReference type="ChEBI" id="CHEBI:15378"/>
        <dbReference type="ChEBI" id="CHEBI:71608"/>
        <dbReference type="ChEBI" id="CHEBI:78442"/>
        <dbReference type="ChEBI" id="CHEBI:78494"/>
        <dbReference type="ChEBI" id="CHEBI:78531"/>
        <dbReference type="EC" id="2.3.2.20"/>
    </reaction>
</comment>
<comment type="subunit">
    <text evidence="4">Monomer.</text>
</comment>
<comment type="miscellaneous">
    <text evidence="6">The reaction proceeds following a ping-pong mechanism forming a covalent intermediate between an active site Ser-37 and the L-phenylalanine residue.</text>
</comment>
<comment type="similarity">
    <text evidence="5">Belongs to the CDPS family.</text>
</comment>
<name>CLPS_STRNR</name>
<protein>
    <recommendedName>
        <fullName>Cyclo(L-leucyl-L-phenylalanyl) synthase</fullName>
        <ecNumber>2.3.2.20</ecNumber>
    </recommendedName>
    <alternativeName>
        <fullName>Cyclodipeptide synthase</fullName>
        <shortName>CDPS</shortName>
    </alternativeName>
</protein>
<reference key="1">
    <citation type="journal article" date="2002" name="Chem. Biol.">
        <title>The albonoursin gene cluster of S noursei biosynthesis of diketopiperazine metabolites independent of nonribosomal peptide synthetases.</title>
        <authorList>
            <person name="Lautru S."/>
            <person name="Gondry M."/>
            <person name="Genet R."/>
            <person name="Pernodet J.L."/>
        </authorList>
    </citation>
    <scope>NUCLEOTIDE SEQUENCE [GENOMIC DNA]</scope>
    <scope>FUNCTION</scope>
    <scope>NOMENCLATURE</scope>
    <source>
        <strain>ATCC 11455 / DSM 40635 / JCM 4922 / KCC S-0922 / NBRC 15452 / NCIMB 8593 / NRRL B-1714 / 48240</strain>
    </source>
</reference>
<reference key="2">
    <citation type="journal article" date="2009" name="Nat. Chem. Biol.">
        <title>Cyclodipeptide synthases arec a family of tRNA-dependent peptide bond-forming enzymes.</title>
        <authorList>
            <person name="Gondry M."/>
            <person name="Sauguet L."/>
            <person name="Belin P."/>
            <person name="Thai R."/>
            <person name="Amouroux R."/>
            <person name="Tellier C."/>
            <person name="Tuphile K."/>
            <person name="Jacquet M."/>
            <person name="Braud S."/>
            <person name="Courcon M."/>
            <person name="Masson C."/>
            <person name="Dubois S."/>
            <person name="Lautru S."/>
            <person name="Lecoq A."/>
            <person name="Hashimoto S."/>
            <person name="Genet R."/>
            <person name="Pernodet J.L."/>
        </authorList>
    </citation>
    <scope>FUNCTION</scope>
    <scope>CATALYTIC ACTIVITY</scope>
    <scope>SUBSTRATE SPECIFICITY</scope>
</reference>
<reference key="3">
    <citation type="journal article" date="2011" name="Nucleic Acids Res.">
        <title>Cyclodipeptide synthases, a family of class-I aminoacyl-tRNA synthetase-like enzymes involved in non-ribosomal peptide synthesis.</title>
        <authorList>
            <person name="Sauguet L."/>
            <person name="Moutiez M."/>
            <person name="Li Y."/>
            <person name="Belin P."/>
            <person name="Seguin J."/>
            <person name="Le Du M.H."/>
            <person name="Thai R."/>
            <person name="Masson C."/>
            <person name="Fonvielle M."/>
            <person name="Pernodet J.L."/>
            <person name="Charbonnier J.B."/>
            <person name="Gondry M."/>
        </authorList>
    </citation>
    <scope>X-RAY CRYSTALLOGRAPHY (1.90 ANGSTROMS) OF 2-239</scope>
    <scope>MUTAGENESIS OF GLY-35; SER-37; TYR-178; GLU-182; LEU-200 AND TYR-202</scope>
    <scope>ACTIVE SITE</scope>
    <scope>REACTION MECHANISM</scope>
    <scope>SUBUNIT</scope>
</reference>
<proteinExistence type="evidence at protein level"/>
<accession>Q8GED7</accession>
<evidence type="ECO:0000250" key="1"/>
<evidence type="ECO:0000269" key="2">
    <source>
    </source>
</evidence>
<evidence type="ECO:0000269" key="3">
    <source>
    </source>
</evidence>
<evidence type="ECO:0000269" key="4">
    <source>
    </source>
</evidence>
<evidence type="ECO:0000305" key="5"/>
<evidence type="ECO:0000305" key="6">
    <source>
    </source>
</evidence>
<evidence type="ECO:0007829" key="7">
    <source>
        <dbReference type="PDB" id="3OQV"/>
    </source>
</evidence>
<evidence type="ECO:0007829" key="8">
    <source>
        <dbReference type="PDB" id="4Q24"/>
    </source>
</evidence>